<feature type="chain" id="PRO_0000368666" description="ATP synthase subunit b">
    <location>
        <begin position="1"/>
        <end position="170"/>
    </location>
</feature>
<feature type="transmembrane region" description="Helical" evidence="1">
    <location>
        <begin position="22"/>
        <end position="41"/>
    </location>
</feature>
<feature type="region of interest" description="Disordered" evidence="2">
    <location>
        <begin position="72"/>
        <end position="98"/>
    </location>
</feature>
<organism>
    <name type="scientific">Prochlorococcus marinus (strain MIT 9301)</name>
    <dbReference type="NCBI Taxonomy" id="167546"/>
    <lineage>
        <taxon>Bacteria</taxon>
        <taxon>Bacillati</taxon>
        <taxon>Cyanobacteriota</taxon>
        <taxon>Cyanophyceae</taxon>
        <taxon>Synechococcales</taxon>
        <taxon>Prochlorococcaceae</taxon>
        <taxon>Prochlorococcus</taxon>
    </lineage>
</organism>
<keyword id="KW-0066">ATP synthesis</keyword>
<keyword id="KW-0138">CF(0)</keyword>
<keyword id="KW-0375">Hydrogen ion transport</keyword>
<keyword id="KW-0406">Ion transport</keyword>
<keyword id="KW-0472">Membrane</keyword>
<keyword id="KW-1185">Reference proteome</keyword>
<keyword id="KW-0793">Thylakoid</keyword>
<keyword id="KW-0812">Transmembrane</keyword>
<keyword id="KW-1133">Transmembrane helix</keyword>
<keyword id="KW-0813">Transport</keyword>
<gene>
    <name evidence="1" type="primary">atpF</name>
    <name type="ordered locus">P9301_16431</name>
</gene>
<dbReference type="EMBL" id="CP000576">
    <property type="protein sequence ID" value="ABO18266.1"/>
    <property type="molecule type" value="Genomic_DNA"/>
</dbReference>
<dbReference type="RefSeq" id="WP_011863565.1">
    <property type="nucleotide sequence ID" value="NC_009091.1"/>
</dbReference>
<dbReference type="SMR" id="A3PEU1"/>
<dbReference type="STRING" id="167546.P9301_16431"/>
<dbReference type="KEGG" id="pmg:P9301_16431"/>
<dbReference type="eggNOG" id="COG0711">
    <property type="taxonomic scope" value="Bacteria"/>
</dbReference>
<dbReference type="HOGENOM" id="CLU_079215_8_1_3"/>
<dbReference type="OrthoDB" id="461217at2"/>
<dbReference type="Proteomes" id="UP000001430">
    <property type="component" value="Chromosome"/>
</dbReference>
<dbReference type="GO" id="GO:0031676">
    <property type="term" value="C:plasma membrane-derived thylakoid membrane"/>
    <property type="evidence" value="ECO:0007669"/>
    <property type="project" value="UniProtKB-SubCell"/>
</dbReference>
<dbReference type="GO" id="GO:0045259">
    <property type="term" value="C:proton-transporting ATP synthase complex"/>
    <property type="evidence" value="ECO:0007669"/>
    <property type="project" value="UniProtKB-KW"/>
</dbReference>
<dbReference type="GO" id="GO:0046933">
    <property type="term" value="F:proton-transporting ATP synthase activity, rotational mechanism"/>
    <property type="evidence" value="ECO:0007669"/>
    <property type="project" value="UniProtKB-UniRule"/>
</dbReference>
<dbReference type="CDD" id="cd06503">
    <property type="entry name" value="ATP-synt_Fo_b"/>
    <property type="match status" value="1"/>
</dbReference>
<dbReference type="HAMAP" id="MF_01398">
    <property type="entry name" value="ATP_synth_b_bprime"/>
    <property type="match status" value="1"/>
</dbReference>
<dbReference type="InterPro" id="IPR002146">
    <property type="entry name" value="ATP_synth_b/b'su_bac/chlpt"/>
</dbReference>
<dbReference type="NCBIfam" id="NF005606">
    <property type="entry name" value="PRK07352.1"/>
    <property type="match status" value="1"/>
</dbReference>
<dbReference type="PANTHER" id="PTHR34264">
    <property type="entry name" value="ATP SYNTHASE SUBUNIT B, CHLOROPLASTIC"/>
    <property type="match status" value="1"/>
</dbReference>
<dbReference type="PANTHER" id="PTHR34264:SF3">
    <property type="entry name" value="ATP SYNTHASE SUBUNIT B, CHLOROPLASTIC"/>
    <property type="match status" value="1"/>
</dbReference>
<dbReference type="Pfam" id="PF00430">
    <property type="entry name" value="ATP-synt_B"/>
    <property type="match status" value="1"/>
</dbReference>
<reference key="1">
    <citation type="journal article" date="2007" name="PLoS Genet.">
        <title>Patterns and implications of gene gain and loss in the evolution of Prochlorococcus.</title>
        <authorList>
            <person name="Kettler G.C."/>
            <person name="Martiny A.C."/>
            <person name="Huang K."/>
            <person name="Zucker J."/>
            <person name="Coleman M.L."/>
            <person name="Rodrigue S."/>
            <person name="Chen F."/>
            <person name="Lapidus A."/>
            <person name="Ferriera S."/>
            <person name="Johnson J."/>
            <person name="Steglich C."/>
            <person name="Church G.M."/>
            <person name="Richardson P."/>
            <person name="Chisholm S.W."/>
        </authorList>
    </citation>
    <scope>NUCLEOTIDE SEQUENCE [LARGE SCALE GENOMIC DNA]</scope>
    <source>
        <strain>MIT 9301</strain>
    </source>
</reference>
<protein>
    <recommendedName>
        <fullName evidence="1">ATP synthase subunit b</fullName>
    </recommendedName>
    <alternativeName>
        <fullName evidence="1">ATP synthase F(0) sector subunit b</fullName>
    </alternativeName>
    <alternativeName>
        <fullName evidence="1">ATPase subunit I</fullName>
    </alternativeName>
    <alternativeName>
        <fullName evidence="1">F-type ATPase subunit b</fullName>
        <shortName evidence="1">F-ATPase subunit b</shortName>
    </alternativeName>
</protein>
<proteinExistence type="inferred from homology"/>
<name>ATPF_PROM0</name>
<accession>A3PEU1</accession>
<comment type="function">
    <text evidence="1">F(1)F(0) ATP synthase produces ATP from ADP in the presence of a proton or sodium gradient. F-type ATPases consist of two structural domains, F(1) containing the extramembraneous catalytic core and F(0) containing the membrane proton channel, linked together by a central stalk and a peripheral stalk. During catalysis, ATP synthesis in the catalytic domain of F(1) is coupled via a rotary mechanism of the central stalk subunits to proton translocation.</text>
</comment>
<comment type="function">
    <text evidence="1">Component of the F(0) channel, it forms part of the peripheral stalk, linking F(1) to F(0).</text>
</comment>
<comment type="subunit">
    <text evidence="1">F-type ATPases have 2 components, F(1) - the catalytic core - and F(0) - the membrane proton channel. F(1) has five subunits: alpha(3), beta(3), gamma(1), delta(1), epsilon(1). F(0) has four main subunits: a(1), b(1), b'(1) and c(10-14). The alpha and beta chains form an alternating ring which encloses part of the gamma chain. F(1) is attached to F(0) by a central stalk formed by the gamma and epsilon chains, while a peripheral stalk is formed by the delta, b and b' chains.</text>
</comment>
<comment type="subcellular location">
    <subcellularLocation>
        <location evidence="1">Cellular thylakoid membrane</location>
        <topology evidence="1">Single-pass membrane protein</topology>
    </subcellularLocation>
</comment>
<comment type="similarity">
    <text evidence="1">Belongs to the ATPase B chain family.</text>
</comment>
<evidence type="ECO:0000255" key="1">
    <source>
        <dbReference type="HAMAP-Rule" id="MF_01398"/>
    </source>
</evidence>
<evidence type="ECO:0000256" key="2">
    <source>
        <dbReference type="SAM" id="MobiDB-lite"/>
    </source>
</evidence>
<sequence>MNLTLFATEGFGLNFNLFETNILNWAVVVFGLYKFLPGFLGKMLQKRREGILLELKDAEDRLLNATQALEKAKKDLSSAEEKASQIKADSLKRSESIRMESEKKAIEEMARIKQSAISDESSEASRAISQLRKEAVELAIKKALDSLPNRLDKTTQENLVTQSINNIEVN</sequence>